<dbReference type="EMBL" id="BA000012">
    <property type="protein sequence ID" value="BAB51007.1"/>
    <property type="molecule type" value="Genomic_DNA"/>
</dbReference>
<dbReference type="RefSeq" id="WP_010912349.1">
    <property type="nucleotide sequence ID" value="NC_002678.2"/>
</dbReference>
<dbReference type="KEGG" id="mlo:mlr4321"/>
<dbReference type="eggNOG" id="COG2917">
    <property type="taxonomic scope" value="Bacteria"/>
</dbReference>
<dbReference type="HOGENOM" id="CLU_089554_1_1_5"/>
<dbReference type="Proteomes" id="UP000000552">
    <property type="component" value="Chromosome"/>
</dbReference>
<dbReference type="GO" id="GO:0005886">
    <property type="term" value="C:plasma membrane"/>
    <property type="evidence" value="ECO:0007669"/>
    <property type="project" value="UniProtKB-SubCell"/>
</dbReference>
<dbReference type="HAMAP" id="MF_00189">
    <property type="entry name" value="YciB"/>
    <property type="match status" value="1"/>
</dbReference>
<dbReference type="InterPro" id="IPR006008">
    <property type="entry name" value="YciB"/>
</dbReference>
<dbReference type="NCBIfam" id="TIGR00997">
    <property type="entry name" value="ispZ"/>
    <property type="match status" value="1"/>
</dbReference>
<dbReference type="NCBIfam" id="NF001323">
    <property type="entry name" value="PRK00259.1-1"/>
    <property type="match status" value="1"/>
</dbReference>
<dbReference type="PANTHER" id="PTHR36917:SF1">
    <property type="entry name" value="INNER MEMBRANE-SPANNING PROTEIN YCIB"/>
    <property type="match status" value="1"/>
</dbReference>
<dbReference type="PANTHER" id="PTHR36917">
    <property type="entry name" value="INTRACELLULAR SEPTATION PROTEIN A-RELATED"/>
    <property type="match status" value="1"/>
</dbReference>
<dbReference type="Pfam" id="PF04279">
    <property type="entry name" value="IspA"/>
    <property type="match status" value="1"/>
</dbReference>
<keyword id="KW-0997">Cell inner membrane</keyword>
<keyword id="KW-1003">Cell membrane</keyword>
<keyword id="KW-0472">Membrane</keyword>
<keyword id="KW-0812">Transmembrane</keyword>
<keyword id="KW-1133">Transmembrane helix</keyword>
<gene>
    <name evidence="1" type="primary">yciB</name>
    <name type="ordered locus">mlr4321</name>
</gene>
<evidence type="ECO:0000255" key="1">
    <source>
        <dbReference type="HAMAP-Rule" id="MF_00189"/>
    </source>
</evidence>
<organism>
    <name type="scientific">Mesorhizobium japonicum (strain LMG 29417 / CECT 9101 / MAFF 303099)</name>
    <name type="common">Mesorhizobium loti (strain MAFF 303099)</name>
    <dbReference type="NCBI Taxonomy" id="266835"/>
    <lineage>
        <taxon>Bacteria</taxon>
        <taxon>Pseudomonadati</taxon>
        <taxon>Pseudomonadota</taxon>
        <taxon>Alphaproteobacteria</taxon>
        <taxon>Hyphomicrobiales</taxon>
        <taxon>Phyllobacteriaceae</taxon>
        <taxon>Mesorhizobium</taxon>
    </lineage>
</organism>
<accession>Q98EB3</accession>
<proteinExistence type="inferred from homology"/>
<reference key="1">
    <citation type="journal article" date="2000" name="DNA Res.">
        <title>Complete genome structure of the nitrogen-fixing symbiotic bacterium Mesorhizobium loti.</title>
        <authorList>
            <person name="Kaneko T."/>
            <person name="Nakamura Y."/>
            <person name="Sato S."/>
            <person name="Asamizu E."/>
            <person name="Kato T."/>
            <person name="Sasamoto S."/>
            <person name="Watanabe A."/>
            <person name="Idesawa K."/>
            <person name="Ishikawa A."/>
            <person name="Kawashima K."/>
            <person name="Kimura T."/>
            <person name="Kishida Y."/>
            <person name="Kiyokawa C."/>
            <person name="Kohara M."/>
            <person name="Matsumoto M."/>
            <person name="Matsuno A."/>
            <person name="Mochizuki Y."/>
            <person name="Nakayama S."/>
            <person name="Nakazaki N."/>
            <person name="Shimpo S."/>
            <person name="Sugimoto M."/>
            <person name="Takeuchi C."/>
            <person name="Yamada M."/>
            <person name="Tabata S."/>
        </authorList>
    </citation>
    <scope>NUCLEOTIDE SEQUENCE [LARGE SCALE GENOMIC DNA]</scope>
    <source>
        <strain>LMG 29417 / CECT 9101 / MAFF 303099</strain>
    </source>
</reference>
<feature type="chain" id="PRO_0000206543" description="Inner membrane-spanning protein YciB">
    <location>
        <begin position="1"/>
        <end position="224"/>
    </location>
</feature>
<feature type="transmembrane region" description="Helical" evidence="1">
    <location>
        <begin position="20"/>
        <end position="40"/>
    </location>
</feature>
<feature type="transmembrane region" description="Helical" evidence="1">
    <location>
        <begin position="61"/>
        <end position="81"/>
    </location>
</feature>
<feature type="transmembrane region" description="Helical" evidence="1">
    <location>
        <begin position="86"/>
        <end position="106"/>
    </location>
</feature>
<feature type="transmembrane region" description="Helical" evidence="1">
    <location>
        <begin position="123"/>
        <end position="143"/>
    </location>
</feature>
<feature type="transmembrane region" description="Helical" evidence="1">
    <location>
        <begin position="156"/>
        <end position="176"/>
    </location>
</feature>
<feature type="transmembrane region" description="Helical" evidence="1">
    <location>
        <begin position="187"/>
        <end position="207"/>
    </location>
</feature>
<name>YCIB_RHILO</name>
<protein>
    <recommendedName>
        <fullName evidence="1">Inner membrane-spanning protein YciB</fullName>
    </recommendedName>
</protein>
<comment type="function">
    <text evidence="1">Plays a role in cell envelope biogenesis, maintenance of cell envelope integrity and membrane homeostasis.</text>
</comment>
<comment type="subcellular location">
    <subcellularLocation>
        <location evidence="1">Cell inner membrane</location>
        <topology evidence="1">Multi-pass membrane protein</topology>
    </subcellularLocation>
</comment>
<comment type="similarity">
    <text evidence="1">Belongs to the YciB family.</text>
</comment>
<sequence length="224" mass="25114">MNPPILERDPSDPQKEKKEGVNPVLKLVLELGPLLVFFFANARGEWLVQKFPVLGEFGGPIFVATGLFMAATAIALIASWLLTRTLPIMPMVSGVVVFIFGALTLYLQDDIFIKMKPTIVNTLFGGVLLGGLYFGRSLLGYVFDSAFRLDAEGWRKLTFRWGLFFLFLAVVNEVVWRNFSTDAWVTFKVWGIMPITLLFTFSQMPLILRHSLDDKASGEEKAGK</sequence>